<keyword id="KW-0687">Ribonucleoprotein</keyword>
<keyword id="KW-0689">Ribosomal protein</keyword>
<name>RL28_SHEPW</name>
<dbReference type="EMBL" id="CP000472">
    <property type="protein sequence ID" value="ACJ28954.1"/>
    <property type="molecule type" value="Genomic_DNA"/>
</dbReference>
<dbReference type="RefSeq" id="WP_020912316.1">
    <property type="nucleotide sequence ID" value="NC_011566.1"/>
</dbReference>
<dbReference type="SMR" id="B8CM30"/>
<dbReference type="STRING" id="225849.swp_2204"/>
<dbReference type="KEGG" id="swp:swp_2204"/>
<dbReference type="eggNOG" id="COG0227">
    <property type="taxonomic scope" value="Bacteria"/>
</dbReference>
<dbReference type="HOGENOM" id="CLU_064548_3_1_6"/>
<dbReference type="OrthoDB" id="9805609at2"/>
<dbReference type="Proteomes" id="UP000000753">
    <property type="component" value="Chromosome"/>
</dbReference>
<dbReference type="GO" id="GO:0022625">
    <property type="term" value="C:cytosolic large ribosomal subunit"/>
    <property type="evidence" value="ECO:0007669"/>
    <property type="project" value="TreeGrafter"/>
</dbReference>
<dbReference type="GO" id="GO:0003735">
    <property type="term" value="F:structural constituent of ribosome"/>
    <property type="evidence" value="ECO:0007669"/>
    <property type="project" value="InterPro"/>
</dbReference>
<dbReference type="GO" id="GO:0006412">
    <property type="term" value="P:translation"/>
    <property type="evidence" value="ECO:0007669"/>
    <property type="project" value="UniProtKB-UniRule"/>
</dbReference>
<dbReference type="FunFam" id="2.30.170.40:FF:000001">
    <property type="entry name" value="50S ribosomal protein L28"/>
    <property type="match status" value="1"/>
</dbReference>
<dbReference type="Gene3D" id="2.30.170.40">
    <property type="entry name" value="Ribosomal protein L28/L24"/>
    <property type="match status" value="1"/>
</dbReference>
<dbReference type="HAMAP" id="MF_00373">
    <property type="entry name" value="Ribosomal_bL28"/>
    <property type="match status" value="1"/>
</dbReference>
<dbReference type="InterPro" id="IPR026569">
    <property type="entry name" value="Ribosomal_bL28"/>
</dbReference>
<dbReference type="InterPro" id="IPR034704">
    <property type="entry name" value="Ribosomal_bL28/bL31-like_sf"/>
</dbReference>
<dbReference type="InterPro" id="IPR001383">
    <property type="entry name" value="Ribosomal_bL28_bact-type"/>
</dbReference>
<dbReference type="InterPro" id="IPR037147">
    <property type="entry name" value="Ribosomal_bL28_sf"/>
</dbReference>
<dbReference type="NCBIfam" id="TIGR00009">
    <property type="entry name" value="L28"/>
    <property type="match status" value="1"/>
</dbReference>
<dbReference type="PANTHER" id="PTHR13528">
    <property type="entry name" value="39S RIBOSOMAL PROTEIN L28, MITOCHONDRIAL"/>
    <property type="match status" value="1"/>
</dbReference>
<dbReference type="PANTHER" id="PTHR13528:SF2">
    <property type="entry name" value="LARGE RIBOSOMAL SUBUNIT PROTEIN BL28M"/>
    <property type="match status" value="1"/>
</dbReference>
<dbReference type="Pfam" id="PF00830">
    <property type="entry name" value="Ribosomal_L28"/>
    <property type="match status" value="1"/>
</dbReference>
<dbReference type="SUPFAM" id="SSF143800">
    <property type="entry name" value="L28p-like"/>
    <property type="match status" value="1"/>
</dbReference>
<feature type="chain" id="PRO_1000121688" description="Large ribosomal subunit protein bL28">
    <location>
        <begin position="1"/>
        <end position="78"/>
    </location>
</feature>
<feature type="region of interest" description="Disordered" evidence="2">
    <location>
        <begin position="1"/>
        <end position="21"/>
    </location>
</feature>
<organism>
    <name type="scientific">Shewanella piezotolerans (strain WP3 / JCM 13877)</name>
    <dbReference type="NCBI Taxonomy" id="225849"/>
    <lineage>
        <taxon>Bacteria</taxon>
        <taxon>Pseudomonadati</taxon>
        <taxon>Pseudomonadota</taxon>
        <taxon>Gammaproteobacteria</taxon>
        <taxon>Alteromonadales</taxon>
        <taxon>Shewanellaceae</taxon>
        <taxon>Shewanella</taxon>
    </lineage>
</organism>
<comment type="similarity">
    <text evidence="1">Belongs to the bacterial ribosomal protein bL28 family.</text>
</comment>
<accession>B8CM30</accession>
<reference key="1">
    <citation type="journal article" date="2008" name="PLoS ONE">
        <title>Environmental adaptation: genomic analysis of the piezotolerant and psychrotolerant deep-sea iron reducing bacterium Shewanella piezotolerans WP3.</title>
        <authorList>
            <person name="Wang F."/>
            <person name="Wang J."/>
            <person name="Jian H."/>
            <person name="Zhang B."/>
            <person name="Li S."/>
            <person name="Wang F."/>
            <person name="Zeng X."/>
            <person name="Gao L."/>
            <person name="Bartlett D.H."/>
            <person name="Yu J."/>
            <person name="Hu S."/>
            <person name="Xiao X."/>
        </authorList>
    </citation>
    <scope>NUCLEOTIDE SEQUENCE [LARGE SCALE GENOMIC DNA]</scope>
    <source>
        <strain>WP3 / JCM 13877</strain>
    </source>
</reference>
<gene>
    <name evidence="1" type="primary">rpmB</name>
    <name type="ordered locus">swp_2204</name>
</gene>
<evidence type="ECO:0000255" key="1">
    <source>
        <dbReference type="HAMAP-Rule" id="MF_00373"/>
    </source>
</evidence>
<evidence type="ECO:0000256" key="2">
    <source>
        <dbReference type="SAM" id="MobiDB-lite"/>
    </source>
</evidence>
<evidence type="ECO:0000305" key="3"/>
<sequence length="78" mass="9117">MSRVCQVTGKKPMVGNNRSHAKNATRRRFLPNLQNHRFWLETEKRFVKLRISTKGMRIIDKKGIEVVVAELRARGEKV</sequence>
<protein>
    <recommendedName>
        <fullName evidence="1">Large ribosomal subunit protein bL28</fullName>
    </recommendedName>
    <alternativeName>
        <fullName evidence="3">50S ribosomal protein L28</fullName>
    </alternativeName>
</protein>
<proteinExistence type="inferred from homology"/>